<sequence length="356" mass="40491">MLPNQILTDITTVKHSFKAETFRPISTLSLSRNLSVSKFVPCLSKENKRDVLETIAKEFSNIEGEEFFVLPLKDLPIWQRECLLEHYLCPYDLSGSLEGEALIVNRAGTLLAGINLRDHLVLHGIDFVWQPEMLLQKLIDLDIRLQQSLSFAFSPDFGFLTTDPLRCGTALVARAFIHVPALRYRNKLSELLVPHQREFACSSLLPLSQESLGDILCLSNICSLGVSEEQILSSLRLVVSKILSAETEARNLLLKENSTEIKNRILRSIGMLTHSCYLDLQEALDATSWIQLGMSMQWIEDSEKHPLWSPMFWDLRRGHLALYNQDPANKTIEKEIIAQIRAQTTKPQAERLILRV</sequence>
<accession>Q9PLP9</accession>
<feature type="chain" id="PRO_0000212018" description="Protein-arginine kinase">
    <location>
        <begin position="1"/>
        <end position="356"/>
    </location>
</feature>
<feature type="domain" description="Phosphagen kinase C-terminal" evidence="1">
    <location>
        <begin position="22"/>
        <end position="249"/>
    </location>
</feature>
<feature type="binding site" evidence="1">
    <location>
        <begin position="25"/>
        <end position="29"/>
    </location>
    <ligand>
        <name>ATP</name>
        <dbReference type="ChEBI" id="CHEBI:30616"/>
    </ligand>
</feature>
<feature type="binding site" evidence="1">
    <location>
        <begin position="172"/>
        <end position="176"/>
    </location>
    <ligand>
        <name>ATP</name>
        <dbReference type="ChEBI" id="CHEBI:30616"/>
    </ligand>
</feature>
<feature type="binding site" evidence="1">
    <location>
        <begin position="202"/>
        <end position="207"/>
    </location>
    <ligand>
        <name>ATP</name>
        <dbReference type="ChEBI" id="CHEBI:30616"/>
    </ligand>
</feature>
<protein>
    <recommendedName>
        <fullName evidence="1">Protein-arginine kinase</fullName>
        <ecNumber evidence="1">2.7.14.1</ecNumber>
    </recommendedName>
</protein>
<organism>
    <name type="scientific">Chlamydia muridarum (strain MoPn / Nigg)</name>
    <dbReference type="NCBI Taxonomy" id="243161"/>
    <lineage>
        <taxon>Bacteria</taxon>
        <taxon>Pseudomonadati</taxon>
        <taxon>Chlamydiota</taxon>
        <taxon>Chlamydiia</taxon>
        <taxon>Chlamydiales</taxon>
        <taxon>Chlamydiaceae</taxon>
        <taxon>Chlamydia/Chlamydophila group</taxon>
        <taxon>Chlamydia</taxon>
    </lineage>
</organism>
<dbReference type="EC" id="2.7.14.1" evidence="1"/>
<dbReference type="EMBL" id="AE002160">
    <property type="protein sequence ID" value="AAF38935.1"/>
    <property type="molecule type" value="Genomic_DNA"/>
</dbReference>
<dbReference type="PIR" id="E81746">
    <property type="entry name" value="E81746"/>
</dbReference>
<dbReference type="RefSeq" id="WP_010229211.1">
    <property type="nucleotide sequence ID" value="NZ_CP063055.1"/>
</dbReference>
<dbReference type="SMR" id="Q9PLP9"/>
<dbReference type="GeneID" id="1245572"/>
<dbReference type="KEGG" id="cmu:TC_0046"/>
<dbReference type="eggNOG" id="COG3869">
    <property type="taxonomic scope" value="Bacteria"/>
</dbReference>
<dbReference type="HOGENOM" id="CLU_066591_0_0_0"/>
<dbReference type="OrthoDB" id="18720at2"/>
<dbReference type="Proteomes" id="UP000000800">
    <property type="component" value="Chromosome"/>
</dbReference>
<dbReference type="GO" id="GO:0005524">
    <property type="term" value="F:ATP binding"/>
    <property type="evidence" value="ECO:0007669"/>
    <property type="project" value="UniProtKB-KW"/>
</dbReference>
<dbReference type="GO" id="GO:0016775">
    <property type="term" value="F:phosphotransferase activity, nitrogenous group as acceptor"/>
    <property type="evidence" value="ECO:0007669"/>
    <property type="project" value="UniProtKB-UniRule"/>
</dbReference>
<dbReference type="GO" id="GO:0004672">
    <property type="term" value="F:protein kinase activity"/>
    <property type="evidence" value="ECO:0007669"/>
    <property type="project" value="UniProtKB-UniRule"/>
</dbReference>
<dbReference type="Gene3D" id="3.30.590.10">
    <property type="entry name" value="Glutamine synthetase/guanido kinase, catalytic domain"/>
    <property type="match status" value="1"/>
</dbReference>
<dbReference type="HAMAP" id="MF_00602">
    <property type="entry name" value="Prot_Arg_kinase"/>
    <property type="match status" value="1"/>
</dbReference>
<dbReference type="InterPro" id="IPR023660">
    <property type="entry name" value="Arg_Kinase"/>
</dbReference>
<dbReference type="InterPro" id="IPR022414">
    <property type="entry name" value="ATP-guanido_PTrfase_cat"/>
</dbReference>
<dbReference type="InterPro" id="IPR014746">
    <property type="entry name" value="Gln_synth/guanido_kin_cat_dom"/>
</dbReference>
<dbReference type="NCBIfam" id="NF002191">
    <property type="entry name" value="PRK01059.1-1"/>
    <property type="match status" value="1"/>
</dbReference>
<dbReference type="Pfam" id="PF00217">
    <property type="entry name" value="ATP-gua_Ptrans"/>
    <property type="match status" value="1"/>
</dbReference>
<dbReference type="SUPFAM" id="SSF55931">
    <property type="entry name" value="Glutamine synthetase/guanido kinase"/>
    <property type="match status" value="1"/>
</dbReference>
<dbReference type="PROSITE" id="PS51510">
    <property type="entry name" value="PHOSPHAGEN_KINASE_C"/>
    <property type="match status" value="1"/>
</dbReference>
<gene>
    <name evidence="1" type="primary">mcsB</name>
    <name type="ordered locus">TC_0046</name>
</gene>
<evidence type="ECO:0000255" key="1">
    <source>
        <dbReference type="HAMAP-Rule" id="MF_00602"/>
    </source>
</evidence>
<reference key="1">
    <citation type="journal article" date="2000" name="Nucleic Acids Res.">
        <title>Genome sequences of Chlamydia trachomatis MoPn and Chlamydia pneumoniae AR39.</title>
        <authorList>
            <person name="Read T.D."/>
            <person name="Brunham R.C."/>
            <person name="Shen C."/>
            <person name="Gill S.R."/>
            <person name="Heidelberg J.F."/>
            <person name="White O."/>
            <person name="Hickey E.K."/>
            <person name="Peterson J.D."/>
            <person name="Utterback T.R."/>
            <person name="Berry K.J."/>
            <person name="Bass S."/>
            <person name="Linher K.D."/>
            <person name="Weidman J.F."/>
            <person name="Khouri H.M."/>
            <person name="Craven B."/>
            <person name="Bowman C."/>
            <person name="Dodson R.J."/>
            <person name="Gwinn M.L."/>
            <person name="Nelson W.C."/>
            <person name="DeBoy R.T."/>
            <person name="Kolonay J.F."/>
            <person name="McClarty G."/>
            <person name="Salzberg S.L."/>
            <person name="Eisen J.A."/>
            <person name="Fraser C.M."/>
        </authorList>
    </citation>
    <scope>NUCLEOTIDE SEQUENCE [LARGE SCALE GENOMIC DNA]</scope>
    <source>
        <strain>MoPn / Nigg</strain>
    </source>
</reference>
<comment type="function">
    <text evidence="1">Catalyzes the specific phosphorylation of arginine residues in proteins.</text>
</comment>
<comment type="catalytic activity">
    <reaction evidence="1">
        <text>L-arginyl-[protein] + ATP = N(omega)-phospho-L-arginyl-[protein] + ADP + H(+)</text>
        <dbReference type="Rhea" id="RHEA:43384"/>
        <dbReference type="Rhea" id="RHEA-COMP:10532"/>
        <dbReference type="Rhea" id="RHEA-COMP:10533"/>
        <dbReference type="ChEBI" id="CHEBI:15378"/>
        <dbReference type="ChEBI" id="CHEBI:29965"/>
        <dbReference type="ChEBI" id="CHEBI:30616"/>
        <dbReference type="ChEBI" id="CHEBI:83226"/>
        <dbReference type="ChEBI" id="CHEBI:456216"/>
        <dbReference type="EC" id="2.7.14.1"/>
    </reaction>
</comment>
<comment type="similarity">
    <text evidence="1">Belongs to the ATP:guanido phosphotransferase family.</text>
</comment>
<keyword id="KW-0067">ATP-binding</keyword>
<keyword id="KW-0418">Kinase</keyword>
<keyword id="KW-0547">Nucleotide-binding</keyword>
<keyword id="KW-0808">Transferase</keyword>
<proteinExistence type="inferred from homology"/>
<name>MCSB_CHLMU</name>